<gene>
    <name evidence="1" type="primary">codY</name>
    <name type="ordered locus">SE_0931</name>
</gene>
<reference key="1">
    <citation type="journal article" date="2003" name="Mol. Microbiol.">
        <title>Genome-based analysis of virulence genes in a non-biofilm-forming Staphylococcus epidermidis strain (ATCC 12228).</title>
        <authorList>
            <person name="Zhang Y.-Q."/>
            <person name="Ren S.-X."/>
            <person name="Li H.-L."/>
            <person name="Wang Y.-X."/>
            <person name="Fu G."/>
            <person name="Yang J."/>
            <person name="Qin Z.-Q."/>
            <person name="Miao Y.-G."/>
            <person name="Wang W.-Y."/>
            <person name="Chen R.-S."/>
            <person name="Shen Y."/>
            <person name="Chen Z."/>
            <person name="Yuan Z.-H."/>
            <person name="Zhao G.-P."/>
            <person name="Qu D."/>
            <person name="Danchin A."/>
            <person name="Wen Y.-M."/>
        </authorList>
    </citation>
    <scope>NUCLEOTIDE SEQUENCE [LARGE SCALE GENOMIC DNA]</scope>
    <source>
        <strain>ATCC 12228 / FDA PCI 1200</strain>
    </source>
</reference>
<name>CODY_STAES</name>
<accession>Q8CPG9</accession>
<organism>
    <name type="scientific">Staphylococcus epidermidis (strain ATCC 12228 / FDA PCI 1200)</name>
    <dbReference type="NCBI Taxonomy" id="176280"/>
    <lineage>
        <taxon>Bacteria</taxon>
        <taxon>Bacillati</taxon>
        <taxon>Bacillota</taxon>
        <taxon>Bacilli</taxon>
        <taxon>Bacillales</taxon>
        <taxon>Staphylococcaceae</taxon>
        <taxon>Staphylococcus</taxon>
    </lineage>
</organism>
<feature type="chain" id="PRO_0000213237" description="Global transcriptional regulator CodY">
    <location>
        <begin position="1"/>
        <end position="257"/>
    </location>
</feature>
<feature type="DNA-binding region" description="H-T-H motif" evidence="1">
    <location>
        <begin position="203"/>
        <end position="222"/>
    </location>
</feature>
<feature type="region of interest" description="GAF domain" evidence="1">
    <location>
        <begin position="1"/>
        <end position="155"/>
    </location>
</feature>
<comment type="function">
    <text evidence="1">DNA-binding global transcriptional regulator which is involved in the adaptive response to starvation and acts by directly or indirectly controlling the expression of numerous genes in response to nutrient availability. During rapid exponential growth, CodY is highly active and represses genes whose products allow adaptation to nutrient depletion.</text>
</comment>
<comment type="subcellular location">
    <subcellularLocation>
        <location evidence="1">Cytoplasm</location>
    </subcellularLocation>
</comment>
<comment type="similarity">
    <text evidence="1">Belongs to the CodY family.</text>
</comment>
<evidence type="ECO:0000255" key="1">
    <source>
        <dbReference type="HAMAP-Rule" id="MF_00621"/>
    </source>
</evidence>
<sequence length="257" mass="28860">MSLLSKTRELNTLLQKHKGIAVDFKDVAQTISNVTVTNVFIVSRRGKILGSCLNELLKSERIKDMLEDRHIPREYTEELMNVKQTESNIDIDNELTVFPPENREVFLNSRTTIFPILGGGERLGTLVLGRVQDDFNENDLVLGEYAATVIGMEILREKHNEVEKEARDKAAITMAINSLSYSEKEAIEHIFEELGGTEGLLIASKVADRVGITRSVIVNALRKLESAGVIESRSLGMKGTFIKVKKDKFLDELEKNK</sequence>
<dbReference type="EMBL" id="AE015929">
    <property type="protein sequence ID" value="AAO04528.1"/>
    <property type="molecule type" value="Genomic_DNA"/>
</dbReference>
<dbReference type="RefSeq" id="NP_764486.1">
    <property type="nucleotide sequence ID" value="NC_004461.1"/>
</dbReference>
<dbReference type="RefSeq" id="WP_002446289.1">
    <property type="nucleotide sequence ID" value="NZ_WBME01000001.1"/>
</dbReference>
<dbReference type="SMR" id="Q8CPG9"/>
<dbReference type="KEGG" id="sep:SE_0931"/>
<dbReference type="PATRIC" id="fig|176280.10.peg.906"/>
<dbReference type="eggNOG" id="COG4465">
    <property type="taxonomic scope" value="Bacteria"/>
</dbReference>
<dbReference type="HOGENOM" id="CLU_089581_0_0_9"/>
<dbReference type="OrthoDB" id="2056at2"/>
<dbReference type="Proteomes" id="UP000001411">
    <property type="component" value="Chromosome"/>
</dbReference>
<dbReference type="GO" id="GO:0005737">
    <property type="term" value="C:cytoplasm"/>
    <property type="evidence" value="ECO:0007669"/>
    <property type="project" value="UniProtKB-SubCell"/>
</dbReference>
<dbReference type="GO" id="GO:0003677">
    <property type="term" value="F:DNA binding"/>
    <property type="evidence" value="ECO:0007669"/>
    <property type="project" value="UniProtKB-UniRule"/>
</dbReference>
<dbReference type="GO" id="GO:0003700">
    <property type="term" value="F:DNA-binding transcription factor activity"/>
    <property type="evidence" value="ECO:0007669"/>
    <property type="project" value="InterPro"/>
</dbReference>
<dbReference type="GO" id="GO:0005525">
    <property type="term" value="F:GTP binding"/>
    <property type="evidence" value="ECO:0007669"/>
    <property type="project" value="InterPro"/>
</dbReference>
<dbReference type="GO" id="GO:0045892">
    <property type="term" value="P:negative regulation of DNA-templated transcription"/>
    <property type="evidence" value="ECO:0007669"/>
    <property type="project" value="UniProtKB-UniRule"/>
</dbReference>
<dbReference type="FunFam" id="1.10.10.10:FF:000034">
    <property type="entry name" value="GTP-sensing transcriptional pleiotropic repressor CodY"/>
    <property type="match status" value="1"/>
</dbReference>
<dbReference type="FunFam" id="3.30.450.40:FF:000003">
    <property type="entry name" value="GTP-sensing transcriptional pleiotropic repressor CodY"/>
    <property type="match status" value="1"/>
</dbReference>
<dbReference type="Gene3D" id="3.30.450.40">
    <property type="match status" value="1"/>
</dbReference>
<dbReference type="Gene3D" id="1.10.10.10">
    <property type="entry name" value="Winged helix-like DNA-binding domain superfamily/Winged helix DNA-binding domain"/>
    <property type="match status" value="1"/>
</dbReference>
<dbReference type="HAMAP" id="MF_00621">
    <property type="entry name" value="HTH_type_CodY"/>
    <property type="match status" value="1"/>
</dbReference>
<dbReference type="InterPro" id="IPR014154">
    <property type="entry name" value="CodY"/>
</dbReference>
<dbReference type="InterPro" id="IPR029016">
    <property type="entry name" value="GAF-like_dom_sf"/>
</dbReference>
<dbReference type="InterPro" id="IPR013198">
    <property type="entry name" value="GTP_trans_reg_CodY_C"/>
</dbReference>
<dbReference type="InterPro" id="IPR010312">
    <property type="entry name" value="Transc_reg_CodY_N"/>
</dbReference>
<dbReference type="InterPro" id="IPR036388">
    <property type="entry name" value="WH-like_DNA-bd_sf"/>
</dbReference>
<dbReference type="InterPro" id="IPR036390">
    <property type="entry name" value="WH_DNA-bd_sf"/>
</dbReference>
<dbReference type="NCBIfam" id="TIGR02787">
    <property type="entry name" value="codY_Gpos"/>
    <property type="match status" value="1"/>
</dbReference>
<dbReference type="NCBIfam" id="NF003170">
    <property type="entry name" value="PRK04158.1"/>
    <property type="match status" value="1"/>
</dbReference>
<dbReference type="PANTHER" id="PTHR40062:SF1">
    <property type="entry name" value="GLOBAL TRANSCRIPTIONAL REGULATOR CODY"/>
    <property type="match status" value="1"/>
</dbReference>
<dbReference type="PANTHER" id="PTHR40062">
    <property type="entry name" value="GTP-SENSING TRANSCRIPTIONAL PLEIOTROPIC REPRESSOR CODY"/>
    <property type="match status" value="1"/>
</dbReference>
<dbReference type="Pfam" id="PF06018">
    <property type="entry name" value="CodY"/>
    <property type="match status" value="1"/>
</dbReference>
<dbReference type="Pfam" id="PF08222">
    <property type="entry name" value="HTH_CodY"/>
    <property type="match status" value="1"/>
</dbReference>
<dbReference type="PIRSF" id="PIRSF011572">
    <property type="entry name" value="GTP_sensing_CodY"/>
    <property type="match status" value="1"/>
</dbReference>
<dbReference type="SUPFAM" id="SSF46785">
    <property type="entry name" value="Winged helix' DNA-binding domain"/>
    <property type="match status" value="1"/>
</dbReference>
<proteinExistence type="inferred from homology"/>
<protein>
    <recommendedName>
        <fullName evidence="1">Global transcriptional regulator CodY</fullName>
    </recommendedName>
</protein>
<keyword id="KW-0963">Cytoplasm</keyword>
<keyword id="KW-0238">DNA-binding</keyword>
<keyword id="KW-0678">Repressor</keyword>
<keyword id="KW-0804">Transcription</keyword>
<keyword id="KW-0805">Transcription regulation</keyword>